<protein>
    <recommendedName>
        <fullName evidence="1">Methionyl-tRNA formyltransferase</fullName>
        <ecNumber evidence="1">2.1.2.9</ecNumber>
    </recommendedName>
</protein>
<proteinExistence type="inferred from homology"/>
<organism>
    <name type="scientific">Rhodopseudomonas palustris (strain ATCC BAA-98 / CGA009)</name>
    <dbReference type="NCBI Taxonomy" id="258594"/>
    <lineage>
        <taxon>Bacteria</taxon>
        <taxon>Pseudomonadati</taxon>
        <taxon>Pseudomonadota</taxon>
        <taxon>Alphaproteobacteria</taxon>
        <taxon>Hyphomicrobiales</taxon>
        <taxon>Nitrobacteraceae</taxon>
        <taxon>Rhodopseudomonas</taxon>
    </lineage>
</organism>
<comment type="function">
    <text evidence="1">Attaches a formyl group to the free amino group of methionyl-tRNA(fMet). The formyl group appears to play a dual role in the initiator identity of N-formylmethionyl-tRNA by promoting its recognition by IF2 and preventing the misappropriation of this tRNA by the elongation apparatus.</text>
</comment>
<comment type="catalytic activity">
    <reaction evidence="1">
        <text>L-methionyl-tRNA(fMet) + (6R)-10-formyltetrahydrofolate = N-formyl-L-methionyl-tRNA(fMet) + (6S)-5,6,7,8-tetrahydrofolate + H(+)</text>
        <dbReference type="Rhea" id="RHEA:24380"/>
        <dbReference type="Rhea" id="RHEA-COMP:9952"/>
        <dbReference type="Rhea" id="RHEA-COMP:9953"/>
        <dbReference type="ChEBI" id="CHEBI:15378"/>
        <dbReference type="ChEBI" id="CHEBI:57453"/>
        <dbReference type="ChEBI" id="CHEBI:78530"/>
        <dbReference type="ChEBI" id="CHEBI:78844"/>
        <dbReference type="ChEBI" id="CHEBI:195366"/>
        <dbReference type="EC" id="2.1.2.9"/>
    </reaction>
</comment>
<comment type="similarity">
    <text evidence="1">Belongs to the Fmt family.</text>
</comment>
<dbReference type="EC" id="2.1.2.9" evidence="1"/>
<dbReference type="EMBL" id="BX572594">
    <property type="protein sequence ID" value="CAE26066.1"/>
    <property type="molecule type" value="Genomic_DNA"/>
</dbReference>
<dbReference type="RefSeq" id="WP_011156190.1">
    <property type="nucleotide sequence ID" value="NZ_CP116810.1"/>
</dbReference>
<dbReference type="SMR" id="Q6NC50"/>
<dbReference type="STRING" id="258594.RPA0622"/>
<dbReference type="GeneID" id="66891643"/>
<dbReference type="eggNOG" id="COG0223">
    <property type="taxonomic scope" value="Bacteria"/>
</dbReference>
<dbReference type="HOGENOM" id="CLU_033347_1_2_5"/>
<dbReference type="PhylomeDB" id="Q6NC50"/>
<dbReference type="GO" id="GO:0005829">
    <property type="term" value="C:cytosol"/>
    <property type="evidence" value="ECO:0007669"/>
    <property type="project" value="TreeGrafter"/>
</dbReference>
<dbReference type="GO" id="GO:0004479">
    <property type="term" value="F:methionyl-tRNA formyltransferase activity"/>
    <property type="evidence" value="ECO:0007669"/>
    <property type="project" value="UniProtKB-UniRule"/>
</dbReference>
<dbReference type="CDD" id="cd08646">
    <property type="entry name" value="FMT_core_Met-tRNA-FMT_N"/>
    <property type="match status" value="1"/>
</dbReference>
<dbReference type="CDD" id="cd08704">
    <property type="entry name" value="Met_tRNA_FMT_C"/>
    <property type="match status" value="1"/>
</dbReference>
<dbReference type="FunFam" id="3.40.50.12230:FF:000001">
    <property type="entry name" value="Methionyl-tRNA formyltransferase"/>
    <property type="match status" value="1"/>
</dbReference>
<dbReference type="Gene3D" id="3.40.50.12230">
    <property type="match status" value="1"/>
</dbReference>
<dbReference type="HAMAP" id="MF_00182">
    <property type="entry name" value="Formyl_trans"/>
    <property type="match status" value="1"/>
</dbReference>
<dbReference type="InterPro" id="IPR005794">
    <property type="entry name" value="Fmt"/>
</dbReference>
<dbReference type="InterPro" id="IPR005793">
    <property type="entry name" value="Formyl_trans_C"/>
</dbReference>
<dbReference type="InterPro" id="IPR002376">
    <property type="entry name" value="Formyl_transf_N"/>
</dbReference>
<dbReference type="InterPro" id="IPR036477">
    <property type="entry name" value="Formyl_transf_N_sf"/>
</dbReference>
<dbReference type="InterPro" id="IPR011034">
    <property type="entry name" value="Formyl_transferase-like_C_sf"/>
</dbReference>
<dbReference type="InterPro" id="IPR001555">
    <property type="entry name" value="GART_AS"/>
</dbReference>
<dbReference type="InterPro" id="IPR044135">
    <property type="entry name" value="Met-tRNA-FMT_C"/>
</dbReference>
<dbReference type="InterPro" id="IPR041711">
    <property type="entry name" value="Met-tRNA-FMT_N"/>
</dbReference>
<dbReference type="NCBIfam" id="TIGR00460">
    <property type="entry name" value="fmt"/>
    <property type="match status" value="1"/>
</dbReference>
<dbReference type="PANTHER" id="PTHR11138">
    <property type="entry name" value="METHIONYL-TRNA FORMYLTRANSFERASE"/>
    <property type="match status" value="1"/>
</dbReference>
<dbReference type="PANTHER" id="PTHR11138:SF5">
    <property type="entry name" value="METHIONYL-TRNA FORMYLTRANSFERASE, MITOCHONDRIAL"/>
    <property type="match status" value="1"/>
</dbReference>
<dbReference type="Pfam" id="PF02911">
    <property type="entry name" value="Formyl_trans_C"/>
    <property type="match status" value="1"/>
</dbReference>
<dbReference type="Pfam" id="PF00551">
    <property type="entry name" value="Formyl_trans_N"/>
    <property type="match status" value="1"/>
</dbReference>
<dbReference type="SUPFAM" id="SSF50486">
    <property type="entry name" value="FMT C-terminal domain-like"/>
    <property type="match status" value="1"/>
</dbReference>
<dbReference type="SUPFAM" id="SSF53328">
    <property type="entry name" value="Formyltransferase"/>
    <property type="match status" value="1"/>
</dbReference>
<dbReference type="PROSITE" id="PS00373">
    <property type="entry name" value="GART"/>
    <property type="match status" value="1"/>
</dbReference>
<evidence type="ECO:0000255" key="1">
    <source>
        <dbReference type="HAMAP-Rule" id="MF_00182"/>
    </source>
</evidence>
<feature type="chain" id="PRO_0000083024" description="Methionyl-tRNA formyltransferase">
    <location>
        <begin position="1"/>
        <end position="310"/>
    </location>
</feature>
<feature type="binding site" evidence="1">
    <location>
        <begin position="111"/>
        <end position="114"/>
    </location>
    <ligand>
        <name>(6S)-5,6,7,8-tetrahydrofolate</name>
        <dbReference type="ChEBI" id="CHEBI:57453"/>
    </ligand>
</feature>
<reference key="1">
    <citation type="journal article" date="2004" name="Nat. Biotechnol.">
        <title>Complete genome sequence of the metabolically versatile photosynthetic bacterium Rhodopseudomonas palustris.</title>
        <authorList>
            <person name="Larimer F.W."/>
            <person name="Chain P."/>
            <person name="Hauser L."/>
            <person name="Lamerdin J.E."/>
            <person name="Malfatti S."/>
            <person name="Do L."/>
            <person name="Land M.L."/>
            <person name="Pelletier D.A."/>
            <person name="Beatty J.T."/>
            <person name="Lang A.S."/>
            <person name="Tabita F.R."/>
            <person name="Gibson J.L."/>
            <person name="Hanson T.E."/>
            <person name="Bobst C."/>
            <person name="Torres y Torres J.L."/>
            <person name="Peres C."/>
            <person name="Harrison F.H."/>
            <person name="Gibson J."/>
            <person name="Harwood C.S."/>
        </authorList>
    </citation>
    <scope>NUCLEOTIDE SEQUENCE [LARGE SCALE GENOMIC DNA]</scope>
    <source>
        <strain>ATCC BAA-98 / CGA009</strain>
    </source>
</reference>
<accession>Q6NC50</accession>
<name>FMT_RHOPA</name>
<keyword id="KW-0648">Protein biosynthesis</keyword>
<keyword id="KW-0808">Transferase</keyword>
<sequence length="310" mass="33035">MPLRLVFMGTPEFAVPTLLALAAHGHDIAAVYTREPKPAGRGMKLQETAVALAAHRLQAPVLTPKTLRTDEALANFRAHEADAAVVVAYGMILPQAILDAPELGCYNLHGSLLPRWRGAAPLNRAIMAGDAETGVMVMKMDAGLDTGDVAMAERIAITDAMTVTDVHDQLARLGADLMVRAMAALERGGLQLTKQSEDGVTYAAKIDKAEAKIDFAKPTRAVLRHIHGLSPFPGAWCELPIEGQPVRIKVLRCAIADGRGEPGEVIDDHLTIACGDGAIRVSQLQRAGKQPMTAEEFLRGTPIAKGVRVG</sequence>
<gene>
    <name evidence="1" type="primary">fmt</name>
    <name type="ordered locus">RPA0622</name>
</gene>